<reference key="1">
    <citation type="journal article" date="2004" name="Proc. Natl. Acad. Sci. U.S.A.">
        <title>Genome sequence of the deep-sea gamma-proteobacterium Idiomarina loihiensis reveals amino acid fermentation as a source of carbon and energy.</title>
        <authorList>
            <person name="Hou S."/>
            <person name="Saw J.H."/>
            <person name="Lee K.S."/>
            <person name="Freitas T.A."/>
            <person name="Belisle C."/>
            <person name="Kawarabayasi Y."/>
            <person name="Donachie S.P."/>
            <person name="Pikina A."/>
            <person name="Galperin M.Y."/>
            <person name="Koonin E.V."/>
            <person name="Makarova K.S."/>
            <person name="Omelchenko M.V."/>
            <person name="Sorokin A."/>
            <person name="Wolf Y.I."/>
            <person name="Li Q.X."/>
            <person name="Keum Y.S."/>
            <person name="Campbell S."/>
            <person name="Denery J."/>
            <person name="Aizawa S."/>
            <person name="Shibata S."/>
            <person name="Malahoff A."/>
            <person name="Alam M."/>
        </authorList>
    </citation>
    <scope>NUCLEOTIDE SEQUENCE [LARGE SCALE GENOMIC DNA]</scope>
    <source>
        <strain>ATCC BAA-735 / DSM 15497 / L2-TR</strain>
    </source>
</reference>
<dbReference type="EC" id="1.14.11.-" evidence="1"/>
<dbReference type="EMBL" id="AE017340">
    <property type="protein sequence ID" value="AAV81600.1"/>
    <property type="molecule type" value="Genomic_DNA"/>
</dbReference>
<dbReference type="RefSeq" id="WP_011234011.1">
    <property type="nucleotide sequence ID" value="NC_006512.1"/>
</dbReference>
<dbReference type="SMR" id="Q5QUG6"/>
<dbReference type="STRING" id="283942.IL0759"/>
<dbReference type="GeneID" id="41335913"/>
<dbReference type="KEGG" id="ilo:IL0759"/>
<dbReference type="eggNOG" id="COG3128">
    <property type="taxonomic scope" value="Bacteria"/>
</dbReference>
<dbReference type="HOGENOM" id="CLU_106663_0_0_6"/>
<dbReference type="OrthoDB" id="9812472at2"/>
<dbReference type="Proteomes" id="UP000001171">
    <property type="component" value="Chromosome"/>
</dbReference>
<dbReference type="GO" id="GO:0016706">
    <property type="term" value="F:2-oxoglutarate-dependent dioxygenase activity"/>
    <property type="evidence" value="ECO:0007669"/>
    <property type="project" value="UniProtKB-UniRule"/>
</dbReference>
<dbReference type="GO" id="GO:0005506">
    <property type="term" value="F:iron ion binding"/>
    <property type="evidence" value="ECO:0007669"/>
    <property type="project" value="UniProtKB-UniRule"/>
</dbReference>
<dbReference type="GO" id="GO:0031418">
    <property type="term" value="F:L-ascorbic acid binding"/>
    <property type="evidence" value="ECO:0007669"/>
    <property type="project" value="UniProtKB-KW"/>
</dbReference>
<dbReference type="GO" id="GO:0006974">
    <property type="term" value="P:DNA damage response"/>
    <property type="evidence" value="ECO:0007669"/>
    <property type="project" value="TreeGrafter"/>
</dbReference>
<dbReference type="GO" id="GO:0006879">
    <property type="term" value="P:intracellular iron ion homeostasis"/>
    <property type="evidence" value="ECO:0007669"/>
    <property type="project" value="TreeGrafter"/>
</dbReference>
<dbReference type="Gene3D" id="2.60.120.620">
    <property type="entry name" value="q2cbj1_9rhob like domain"/>
    <property type="match status" value="1"/>
</dbReference>
<dbReference type="Gene3D" id="4.10.860.20">
    <property type="entry name" value="Rabenosyn, Rab binding domain"/>
    <property type="match status" value="1"/>
</dbReference>
<dbReference type="HAMAP" id="MF_00657">
    <property type="entry name" value="Hydroxyl_YbiX"/>
    <property type="match status" value="1"/>
</dbReference>
<dbReference type="InterPro" id="IPR005123">
    <property type="entry name" value="Oxoglu/Fe-dep_dioxygenase_dom"/>
</dbReference>
<dbReference type="InterPro" id="IPR041097">
    <property type="entry name" value="PKHD_C"/>
</dbReference>
<dbReference type="InterPro" id="IPR023550">
    <property type="entry name" value="PKHD_hydroxylase"/>
</dbReference>
<dbReference type="InterPro" id="IPR006620">
    <property type="entry name" value="Pro_4_hyd_alph"/>
</dbReference>
<dbReference type="InterPro" id="IPR044862">
    <property type="entry name" value="Pro_4_hyd_alph_FE2OG_OXY"/>
</dbReference>
<dbReference type="NCBIfam" id="NF003974">
    <property type="entry name" value="PRK05467.1-3"/>
    <property type="match status" value="1"/>
</dbReference>
<dbReference type="NCBIfam" id="NF003975">
    <property type="entry name" value="PRK05467.1-4"/>
    <property type="match status" value="1"/>
</dbReference>
<dbReference type="PANTHER" id="PTHR41536">
    <property type="entry name" value="PKHD-TYPE HYDROXYLASE YBIX"/>
    <property type="match status" value="1"/>
</dbReference>
<dbReference type="PANTHER" id="PTHR41536:SF1">
    <property type="entry name" value="PKHD-TYPE HYDROXYLASE YBIX"/>
    <property type="match status" value="1"/>
</dbReference>
<dbReference type="Pfam" id="PF13640">
    <property type="entry name" value="2OG-FeII_Oxy_3"/>
    <property type="match status" value="1"/>
</dbReference>
<dbReference type="Pfam" id="PF18331">
    <property type="entry name" value="PKHD_C"/>
    <property type="match status" value="1"/>
</dbReference>
<dbReference type="SMART" id="SM00702">
    <property type="entry name" value="P4Hc"/>
    <property type="match status" value="1"/>
</dbReference>
<dbReference type="PROSITE" id="PS51471">
    <property type="entry name" value="FE2OG_OXY"/>
    <property type="match status" value="1"/>
</dbReference>
<proteinExistence type="inferred from homology"/>
<protein>
    <recommendedName>
        <fullName evidence="1">PKHD-type hydroxylase IL0759</fullName>
        <ecNumber evidence="1">1.14.11.-</ecNumber>
    </recommendedName>
</protein>
<feature type="chain" id="PRO_0000346485" description="PKHD-type hydroxylase IL0759">
    <location>
        <begin position="1"/>
        <end position="218"/>
    </location>
</feature>
<feature type="domain" description="Fe2OG dioxygenase" evidence="1">
    <location>
        <begin position="76"/>
        <end position="170"/>
    </location>
</feature>
<feature type="binding site" evidence="1">
    <location>
        <position position="94"/>
    </location>
    <ligand>
        <name>Fe cation</name>
        <dbReference type="ChEBI" id="CHEBI:24875"/>
    </ligand>
</feature>
<feature type="binding site" evidence="1">
    <location>
        <position position="96"/>
    </location>
    <ligand>
        <name>Fe cation</name>
        <dbReference type="ChEBI" id="CHEBI:24875"/>
    </ligand>
</feature>
<feature type="binding site" evidence="1">
    <location>
        <position position="151"/>
    </location>
    <ligand>
        <name>Fe cation</name>
        <dbReference type="ChEBI" id="CHEBI:24875"/>
    </ligand>
</feature>
<feature type="binding site" evidence="1">
    <location>
        <position position="161"/>
    </location>
    <ligand>
        <name>2-oxoglutarate</name>
        <dbReference type="ChEBI" id="CHEBI:16810"/>
    </ligand>
</feature>
<comment type="cofactor">
    <cofactor evidence="1">
        <name>Fe(2+)</name>
        <dbReference type="ChEBI" id="CHEBI:29033"/>
    </cofactor>
    <text evidence="1">Binds 1 Fe(2+) ion per subunit.</text>
</comment>
<comment type="cofactor">
    <cofactor evidence="1">
        <name>L-ascorbate</name>
        <dbReference type="ChEBI" id="CHEBI:38290"/>
    </cofactor>
</comment>
<gene>
    <name type="ordered locus">IL0759</name>
</gene>
<sequence length="218" mass="24423">MILQISNAVDTDTVKSIVAGLDAGQFSDGKKTAGWAAKDVKNNQQLSGKKSEAATQVLLDRLQQNALVQSVMRPKQVARVTINRYQQGEYYGTHMDDSLMNGVRTDISFTLGLSPLSDFEGGELVIEDASGERSWRLGQGDILMYPSHYLHRVNPVTKGSRLAMIGWVQSLVKQPNYRELLFDIEQSLKAEFDANGKSENFDRLTKVFHNLLREWSDV</sequence>
<keyword id="KW-0223">Dioxygenase</keyword>
<keyword id="KW-0408">Iron</keyword>
<keyword id="KW-0479">Metal-binding</keyword>
<keyword id="KW-0560">Oxidoreductase</keyword>
<keyword id="KW-1185">Reference proteome</keyword>
<keyword id="KW-0847">Vitamin C</keyword>
<organism>
    <name type="scientific">Idiomarina loihiensis (strain ATCC BAA-735 / DSM 15497 / L2-TR)</name>
    <dbReference type="NCBI Taxonomy" id="283942"/>
    <lineage>
        <taxon>Bacteria</taxon>
        <taxon>Pseudomonadati</taxon>
        <taxon>Pseudomonadota</taxon>
        <taxon>Gammaproteobacteria</taxon>
        <taxon>Alteromonadales</taxon>
        <taxon>Idiomarinaceae</taxon>
        <taxon>Idiomarina</taxon>
    </lineage>
</organism>
<evidence type="ECO:0000255" key="1">
    <source>
        <dbReference type="HAMAP-Rule" id="MF_00657"/>
    </source>
</evidence>
<accession>Q5QUG6</accession>
<name>Y759_IDILO</name>